<reference key="1">
    <citation type="journal article" date="2000" name="Mol. Endocrinol.">
        <title>Sequence similarities between a novel putative G protein-coupled receptor and Na+/Ca2+ exchangers define a cation binding domain.</title>
        <authorList>
            <person name="Nikkila H."/>
            <person name="McMillan D.R."/>
            <person name="Nunez B.S."/>
            <person name="Pascoe L."/>
            <person name="Curnow K.M."/>
            <person name="White P.C."/>
        </authorList>
    </citation>
    <scope>NUCLEOTIDE SEQUENCE [MRNA] (ISOFORM 2)</scope>
    <scope>VARIANT GLY-5344</scope>
    <scope>TISSUE SPECIFICITY</scope>
</reference>
<reference key="2">
    <citation type="journal article" date="2002" name="J. Biol. Chem.">
        <title>Very large G protein-coupled receptor-1, the largest known cell surface protein, is highly expressed in the developing central nervous system.</title>
        <authorList>
            <person name="McMillan D.R."/>
            <person name="Kayes-Wandover K.M."/>
            <person name="Richardson J.A."/>
            <person name="White P.C."/>
        </authorList>
    </citation>
    <scope>NUCLEOTIDE SEQUENCE [MRNA] (ISOFORMS 1; 2 AND 3)</scope>
    <scope>VARIANT GLY-5344</scope>
    <scope>DEVELOPMENTAL STAGE</scope>
    <scope>DOMAIN</scope>
</reference>
<reference key="3">
    <citation type="journal article" date="2004" name="Nature">
        <title>The DNA sequence and comparative analysis of human chromosome 5.</title>
        <authorList>
            <person name="Schmutz J."/>
            <person name="Martin J."/>
            <person name="Terry A."/>
            <person name="Couronne O."/>
            <person name="Grimwood J."/>
            <person name="Lowry S."/>
            <person name="Gordon L.A."/>
            <person name="Scott D."/>
            <person name="Xie G."/>
            <person name="Huang W."/>
            <person name="Hellsten U."/>
            <person name="Tran-Gyamfi M."/>
            <person name="She X."/>
            <person name="Prabhakar S."/>
            <person name="Aerts A."/>
            <person name="Altherr M."/>
            <person name="Bajorek E."/>
            <person name="Black S."/>
            <person name="Branscomb E."/>
            <person name="Caoile C."/>
            <person name="Challacombe J.F."/>
            <person name="Chan Y.M."/>
            <person name="Denys M."/>
            <person name="Detter J.C."/>
            <person name="Escobar J."/>
            <person name="Flowers D."/>
            <person name="Fotopulos D."/>
            <person name="Glavina T."/>
            <person name="Gomez M."/>
            <person name="Gonzales E."/>
            <person name="Goodstein D."/>
            <person name="Grigoriev I."/>
            <person name="Groza M."/>
            <person name="Hammon N."/>
            <person name="Hawkins T."/>
            <person name="Haydu L."/>
            <person name="Israni S."/>
            <person name="Jett J."/>
            <person name="Kadner K."/>
            <person name="Kimball H."/>
            <person name="Kobayashi A."/>
            <person name="Lopez F."/>
            <person name="Lou Y."/>
            <person name="Martinez D."/>
            <person name="Medina C."/>
            <person name="Morgan J."/>
            <person name="Nandkeshwar R."/>
            <person name="Noonan J.P."/>
            <person name="Pitluck S."/>
            <person name="Pollard M."/>
            <person name="Predki P."/>
            <person name="Priest J."/>
            <person name="Ramirez L."/>
            <person name="Retterer J."/>
            <person name="Rodriguez A."/>
            <person name="Rogers S."/>
            <person name="Salamov A."/>
            <person name="Salazar A."/>
            <person name="Thayer N."/>
            <person name="Tice H."/>
            <person name="Tsai M."/>
            <person name="Ustaszewska A."/>
            <person name="Vo N."/>
            <person name="Wheeler J."/>
            <person name="Wu K."/>
            <person name="Yang J."/>
            <person name="Dickson M."/>
            <person name="Cheng J.-F."/>
            <person name="Eichler E.E."/>
            <person name="Olsen A."/>
            <person name="Pennacchio L.A."/>
            <person name="Rokhsar D.S."/>
            <person name="Richardson P."/>
            <person name="Lucas S.M."/>
            <person name="Myers R.M."/>
            <person name="Rubin E.M."/>
        </authorList>
    </citation>
    <scope>NUCLEOTIDE SEQUENCE [LARGE SCALE GENOMIC DNA]</scope>
</reference>
<reference key="4">
    <citation type="journal article" date="2001" name="DNA Res.">
        <title>Prediction of the coding sequences of unidentified human genes. XXII. The complete sequences of 50 new cDNA clones which code for large proteins.</title>
        <authorList>
            <person name="Nagase T."/>
            <person name="Kikuno R."/>
            <person name="Ohara O."/>
        </authorList>
    </citation>
    <scope>NUCLEOTIDE SEQUENCE [LARGE SCALE MRNA] OF 413-6306 (ISOFORM 4)</scope>
    <scope>VARIANT PHE-1093</scope>
    <source>
        <tissue>Brain</tissue>
    </source>
</reference>
<reference key="5">
    <citation type="journal article" date="2001" name="Genome Res.">
        <title>Towards a catalog of human genes and proteins: sequencing and analysis of 500 novel complete protein coding human cDNAs.</title>
        <authorList>
            <person name="Wiemann S."/>
            <person name="Weil B."/>
            <person name="Wellenreuther R."/>
            <person name="Gassenhuber J."/>
            <person name="Glassl S."/>
            <person name="Ansorge W."/>
            <person name="Boecher M."/>
            <person name="Bloecker H."/>
            <person name="Bauersachs S."/>
            <person name="Blum H."/>
            <person name="Lauber J."/>
            <person name="Duesterhoeft A."/>
            <person name="Beyer A."/>
            <person name="Koehrer K."/>
            <person name="Strack N."/>
            <person name="Mewes H.-W."/>
            <person name="Ottenwaelder B."/>
            <person name="Obermaier B."/>
            <person name="Tampe J."/>
            <person name="Heubner D."/>
            <person name="Wambutt R."/>
            <person name="Korn B."/>
            <person name="Klein M."/>
            <person name="Poustka A."/>
        </authorList>
    </citation>
    <scope>NUCLEOTIDE SEQUENCE [LARGE SCALE MRNA] OF 2436-4042 (ISOFORM 1)</scope>
    <scope>VARIANTS SER-2584 AND LYS-3471</scope>
    <source>
        <tissue>Amygdala</tissue>
    </source>
</reference>
<reference key="6">
    <citation type="journal article" date="1998" name="DNA Res.">
        <title>Prediction of the coding sequences of unidentified human genes. X. The complete sequences of 100 new cDNA clones from brain which can code for large proteins in vitro.</title>
        <authorList>
            <person name="Ishikawa K."/>
            <person name="Nagase T."/>
            <person name="Suyama M."/>
            <person name="Miyajima N."/>
            <person name="Tanaka A."/>
            <person name="Kotani H."/>
            <person name="Nomura N."/>
            <person name="Ohara O."/>
        </authorList>
    </citation>
    <scope>NUCLEOTIDE SEQUENCE [LARGE SCALE MRNA] OF 5107-6306 (ISOFORMS 1/2)</scope>
    <scope>VARIANT GLY-5344</scope>
    <source>
        <tissue>Brain</tissue>
    </source>
</reference>
<reference key="7">
    <citation type="journal article" date="2002" name="DNA Res.">
        <title>Construction of expression-ready cDNA clones for KIAA genes: manual curation of 330 KIAA cDNA clones.</title>
        <authorList>
            <person name="Nakajima D."/>
            <person name="Okazaki N."/>
            <person name="Yamakawa H."/>
            <person name="Kikuno R."/>
            <person name="Ohara O."/>
            <person name="Nagase T."/>
        </authorList>
    </citation>
    <scope>SEQUENCE REVISION</scope>
</reference>
<reference key="8">
    <citation type="journal article" date="2006" name="Hum. Mol. Genet.">
        <title>The DFNB31 gene product whirlin connects to the Usher protein network in the cochlea and retina by direct association with USH2A and VLGR1.</title>
        <authorList>
            <person name="van Wijk E."/>
            <person name="van der Zwaag B."/>
            <person name="Peters T."/>
            <person name="Zimmermann U."/>
            <person name="Te Brinke H."/>
            <person name="Kersten F.F.J."/>
            <person name="Maerker T."/>
            <person name="Aller E."/>
            <person name="Hoefsloot L.H."/>
            <person name="Cremers C.W.R.J."/>
            <person name="Cremers F.P.M."/>
            <person name="Wolfrum U."/>
            <person name="Knipper M."/>
            <person name="Roepman R."/>
            <person name="Kremer H."/>
        </authorList>
    </citation>
    <scope>INTERACTION WITH WHRN</scope>
</reference>
<reference key="9">
    <citation type="journal article" date="2010" name="J. Clin. Invest.">
        <title>PDZD7 is a modifier of retinal disease and a contributor to digenic Usher syndrome.</title>
        <authorList>
            <person name="Ebermann I."/>
            <person name="Phillips J.B."/>
            <person name="Liebau M.C."/>
            <person name="Koenekoop R.K."/>
            <person name="Schermer B."/>
            <person name="Lopez I."/>
            <person name="Schafer E."/>
            <person name="Roux A.F."/>
            <person name="Dafinger C."/>
            <person name="Bernd A."/>
            <person name="Zrenner E."/>
            <person name="Claustres M."/>
            <person name="Blanco B."/>
            <person name="Nurnberg G."/>
            <person name="Nurnberg P."/>
            <person name="Ruland R."/>
            <person name="Westerfield M."/>
            <person name="Benzing T."/>
            <person name="Bolz H.J."/>
        </authorList>
    </citation>
    <scope>INTERACTION WITH PDZD7</scope>
</reference>
<reference key="10">
    <citation type="journal article" date="2015" name="Pharmacol. Rev.">
        <title>International union of basic and clinical pharmacology. XCIV. Adhesion G protein-coupled receptors.</title>
        <authorList>
            <person name="Hamann J."/>
            <person name="Aust G."/>
            <person name="Arac D."/>
            <person name="Engel F.B."/>
            <person name="Formstone C."/>
            <person name="Fredriksson R."/>
            <person name="Hall R.A."/>
            <person name="Harty B.L."/>
            <person name="Kirchhoff C."/>
            <person name="Knapp B."/>
            <person name="Krishnan A."/>
            <person name="Liebscher I."/>
            <person name="Lin H.H."/>
            <person name="Martinelli D.C."/>
            <person name="Monk K.R."/>
            <person name="Peeters M.C."/>
            <person name="Piao X."/>
            <person name="Promel S."/>
            <person name="Schoneberg T."/>
            <person name="Schwartz T.W."/>
            <person name="Singer K."/>
            <person name="Stacey M."/>
            <person name="Ushkaryov Y.A."/>
            <person name="Vallon M."/>
            <person name="Wolfrum U."/>
            <person name="Wright M.W."/>
            <person name="Xu L."/>
            <person name="Langenhan T."/>
            <person name="Schioth H.B."/>
        </authorList>
    </citation>
    <scope>NOMENCLATURE</scope>
</reference>
<reference key="11">
    <citation type="journal article" date="2015" name="Proteomics">
        <title>N-terminome analysis of the human mitochondrial proteome.</title>
        <authorList>
            <person name="Vaca Jacome A.S."/>
            <person name="Rabilloud T."/>
            <person name="Schaeffer-Reiss C."/>
            <person name="Rompais M."/>
            <person name="Ayoub D."/>
            <person name="Lane L."/>
            <person name="Bairoch A."/>
            <person name="Van Dorsselaer A."/>
            <person name="Carapito C."/>
        </authorList>
    </citation>
    <scope>IDENTIFICATION BY MASS SPECTROMETRY [LARGE SCALE ANALYSIS]</scope>
</reference>
<reference key="12">
    <citation type="journal article" date="2002" name="Ann. Neurol.">
        <title>A nonsense mutation of the MASS1 gene in a family with febrile and afebrile seizures.</title>
        <authorList>
            <person name="Nakayama J."/>
            <person name="Fu Y.H."/>
            <person name="Clark A.M."/>
            <person name="Nakahara S."/>
            <person name="Hamano K."/>
            <person name="Iwasaki N."/>
            <person name="Matsui A."/>
            <person name="Arinami T."/>
            <person name="Ptacek L.J."/>
        </authorList>
    </citation>
    <scope>POSSIBLE INVOLVEMENT IN FAMILIAL FEBRILE CONVULSIONS 4</scope>
</reference>
<reference key="13">
    <citation type="journal article" date="2004" name="Am. J. Hum. Genet.">
        <title>Mutations in the VLGR1 gene implicate G-protein signaling in the pathogenesis of Usher syndrome type II.</title>
        <authorList>
            <person name="Weston M.D."/>
            <person name="Luijendijk M.W.J."/>
            <person name="Humphrey K.D."/>
            <person name="Moeller C."/>
            <person name="Kimberling W.J."/>
        </authorList>
    </citation>
    <scope>INVOLVEMENT IN USH2C</scope>
    <scope>VARIANTS ARG-127; LYS-249; PHE-1093; MET-1927; ILE-1951; ASP-1985; LEU-1987; PHE-2004; CYS-2232; SER-2345; ALA-2379; SER-2584; LEU-2764; THR-2803; VAL-3217; ASP-3248; LYS-3471 AND GLY-5344</scope>
</reference>
<reference key="14">
    <citation type="journal article" date="2012" name="Hum. Mutat.">
        <title>Non-USH2A mutations in USH2 patients.</title>
        <authorList>
            <person name="Besnard T."/>
            <person name="Vache C."/>
            <person name="Baux D."/>
            <person name="Larrieu L."/>
            <person name="Abadie C."/>
            <person name="Blanchet C."/>
            <person name="Odent S."/>
            <person name="Blanchet P."/>
            <person name="Calvas P."/>
            <person name="Hamel C."/>
            <person name="Dollfus H."/>
            <person name="Lina-Granade G."/>
            <person name="Lespinasse J."/>
            <person name="David A."/>
            <person name="Isidor B."/>
            <person name="Morin G."/>
            <person name="Malcolm S."/>
            <person name="Tuffery-Giraud S."/>
            <person name="Claustres M."/>
            <person name="Roux A.F."/>
        </authorList>
    </citation>
    <scope>VARIANTS USH2C TRP-4789 AND ARG-5978</scope>
</reference>
<protein>
    <recommendedName>
        <fullName evidence="18">Adhesion G-protein coupled receptor V1</fullName>
        <shortName evidence="18">ADGRV1</shortName>
        <ecNumber evidence="1">3.4.-.-</ecNumber>
    </recommendedName>
    <alternativeName>
        <fullName>G-protein coupled receptor 98</fullName>
    </alternativeName>
    <alternativeName>
        <fullName>Monogenic audiogenic seizure susceptibility protein 1 homolog</fullName>
    </alternativeName>
    <alternativeName>
        <fullName>Usher syndrome type-2C protein</fullName>
    </alternativeName>
    <alternativeName>
        <fullName>Very large G-protein coupled receptor 1</fullName>
    </alternativeName>
    <component>
        <recommendedName>
            <fullName evidence="1">ADGRV1 subunit alpha</fullName>
        </recommendedName>
    </component>
    <component>
        <recommendedName>
            <fullName evidence="1">ADGRV1 subunit beta</fullName>
        </recommendedName>
    </component>
</protein>
<name>AGRV1_HUMAN</name>
<dbReference type="EC" id="3.4.-.-" evidence="1"/>
<dbReference type="EMBL" id="AF055084">
    <property type="protein sequence ID" value="AAD55586.1"/>
    <property type="molecule type" value="mRNA"/>
</dbReference>
<dbReference type="EMBL" id="AF435925">
    <property type="protein sequence ID" value="AAL30811.1"/>
    <property type="status" value="ALT_FRAME"/>
    <property type="molecule type" value="mRNA"/>
</dbReference>
<dbReference type="EMBL" id="AC027323">
    <property type="status" value="NOT_ANNOTATED_CDS"/>
    <property type="molecule type" value="Genomic_DNA"/>
</dbReference>
<dbReference type="EMBL" id="AC034215">
    <property type="status" value="NOT_ANNOTATED_CDS"/>
    <property type="molecule type" value="Genomic_DNA"/>
</dbReference>
<dbReference type="EMBL" id="AC074132">
    <property type="status" value="NOT_ANNOTATED_CDS"/>
    <property type="molecule type" value="Genomic_DNA"/>
</dbReference>
<dbReference type="EMBL" id="AC093281">
    <property type="status" value="NOT_ANNOTATED_CDS"/>
    <property type="molecule type" value="Genomic_DNA"/>
</dbReference>
<dbReference type="EMBL" id="AC093529">
    <property type="status" value="NOT_ANNOTATED_CDS"/>
    <property type="molecule type" value="Genomic_DNA"/>
</dbReference>
<dbReference type="EMBL" id="AC094109">
    <property type="status" value="NOT_ANNOTATED_CDS"/>
    <property type="molecule type" value="Genomic_DNA"/>
</dbReference>
<dbReference type="EMBL" id="AC099512">
    <property type="status" value="NOT_ANNOTATED_CDS"/>
    <property type="molecule type" value="Genomic_DNA"/>
</dbReference>
<dbReference type="EMBL" id="AB075823">
    <property type="protein sequence ID" value="BAB85529.1"/>
    <property type="molecule type" value="mRNA"/>
</dbReference>
<dbReference type="EMBL" id="AL136541">
    <property type="protein sequence ID" value="CAB66476.2"/>
    <property type="status" value="ALT_SEQ"/>
    <property type="molecule type" value="mRNA"/>
</dbReference>
<dbReference type="EMBL" id="AB014586">
    <property type="protein sequence ID" value="BAA31661.2"/>
    <property type="molecule type" value="mRNA"/>
</dbReference>
<dbReference type="CCDS" id="CCDS47246.1">
    <molecule id="Q8WXG9-1"/>
</dbReference>
<dbReference type="RefSeq" id="NP_115495.3">
    <molecule id="Q8WXG9-1"/>
    <property type="nucleotide sequence ID" value="NM_032119.4"/>
</dbReference>
<dbReference type="BioGRID" id="123854">
    <property type="interactions" value="58"/>
</dbReference>
<dbReference type="ComplexPortal" id="CPX-2821">
    <property type="entry name" value="USH2 complex"/>
</dbReference>
<dbReference type="CORUM" id="Q8WXG9"/>
<dbReference type="FunCoup" id="Q8WXG9">
    <property type="interactions" value="480"/>
</dbReference>
<dbReference type="IntAct" id="Q8WXG9">
    <property type="interactions" value="48"/>
</dbReference>
<dbReference type="MINT" id="Q8WXG9"/>
<dbReference type="STRING" id="9606.ENSP00000384582"/>
<dbReference type="TCDB" id="9.A.14.6.11">
    <property type="family name" value="the g-protein-coupled receptor (gpcr) family"/>
</dbReference>
<dbReference type="GlyConnect" id="1289">
    <property type="glycosylation" value="2 N-Linked glycans (2 sites)"/>
</dbReference>
<dbReference type="GlyCosmos" id="Q8WXG9">
    <property type="glycosylation" value="4 sites, 3 glycans"/>
</dbReference>
<dbReference type="GlyGen" id="Q8WXG9">
    <property type="glycosylation" value="37 sites, 11 N-linked glycans (30 sites), 1 O-linked glycan (4 sites)"/>
</dbReference>
<dbReference type="iPTMnet" id="Q8WXG9"/>
<dbReference type="PhosphoSitePlus" id="Q8WXG9"/>
<dbReference type="BioMuta" id="ADGRV1"/>
<dbReference type="DMDM" id="327478512"/>
<dbReference type="jPOST" id="Q8WXG9"/>
<dbReference type="MassIVE" id="Q8WXG9"/>
<dbReference type="PaxDb" id="9606-ENSP00000384582"/>
<dbReference type="PeptideAtlas" id="Q8WXG9"/>
<dbReference type="ProteomicsDB" id="75040">
    <molecule id="Q8WXG9-1"/>
</dbReference>
<dbReference type="ProteomicsDB" id="75041">
    <molecule id="Q8WXG9-2"/>
</dbReference>
<dbReference type="ProteomicsDB" id="75042">
    <molecule id="Q8WXG9-3"/>
</dbReference>
<dbReference type="ProteomicsDB" id="75043">
    <molecule id="Q8WXG9-4"/>
</dbReference>
<dbReference type="Antibodypedia" id="6556">
    <property type="antibodies" value="117 antibodies from 23 providers"/>
</dbReference>
<dbReference type="DNASU" id="84059"/>
<dbReference type="Ensembl" id="ENST00000405460.9">
    <molecule id="Q8WXG9-1"/>
    <property type="protein sequence ID" value="ENSP00000384582.2"/>
    <property type="gene ID" value="ENSG00000164199.18"/>
</dbReference>
<dbReference type="GeneID" id="84059"/>
<dbReference type="KEGG" id="hsa:84059"/>
<dbReference type="MANE-Select" id="ENST00000405460.9">
    <property type="protein sequence ID" value="ENSP00000384582.2"/>
    <property type="RefSeq nucleotide sequence ID" value="NM_032119.4"/>
    <property type="RefSeq protein sequence ID" value="NP_115495.3"/>
</dbReference>
<dbReference type="UCSC" id="uc003kju.4">
    <molecule id="Q8WXG9-1"/>
    <property type="organism name" value="human"/>
</dbReference>
<dbReference type="AGR" id="HGNC:17416"/>
<dbReference type="CTD" id="84059"/>
<dbReference type="DisGeNET" id="84059"/>
<dbReference type="GeneCards" id="ADGRV1"/>
<dbReference type="GeneReviews" id="ADGRV1"/>
<dbReference type="HGNC" id="HGNC:17416">
    <property type="gene designation" value="ADGRV1"/>
</dbReference>
<dbReference type="HPA" id="ENSG00000164199">
    <property type="expression patterns" value="Tissue enriched (adrenal)"/>
</dbReference>
<dbReference type="MalaCards" id="ADGRV1"/>
<dbReference type="MIM" id="602851">
    <property type="type" value="gene"/>
</dbReference>
<dbReference type="MIM" id="604352">
    <property type="type" value="phenotype"/>
</dbReference>
<dbReference type="MIM" id="605472">
    <property type="type" value="phenotype"/>
</dbReference>
<dbReference type="neXtProt" id="NX_Q8WXG9"/>
<dbReference type="OpenTargets" id="ENSG00000164199"/>
<dbReference type="Orphanet" id="36387">
    <property type="disease" value="Genetic epilepsy with febrile seizure plus"/>
</dbReference>
<dbReference type="Orphanet" id="231178">
    <property type="disease" value="Usher syndrome type 2"/>
</dbReference>
<dbReference type="VEuPathDB" id="HostDB:ENSG00000164199"/>
<dbReference type="eggNOG" id="KOG1306">
    <property type="taxonomic scope" value="Eukaryota"/>
</dbReference>
<dbReference type="GeneTree" id="ENSGT00940000154880"/>
<dbReference type="HOGENOM" id="CLU_223063_0_0_1"/>
<dbReference type="InParanoid" id="Q8WXG9"/>
<dbReference type="OMA" id="RYTAFEV"/>
<dbReference type="OrthoDB" id="2324346at2759"/>
<dbReference type="PAN-GO" id="Q8WXG9">
    <property type="GO annotations" value="9 GO annotations based on evolutionary models"/>
</dbReference>
<dbReference type="PhylomeDB" id="Q8WXG9"/>
<dbReference type="TreeFam" id="TF331149"/>
<dbReference type="PathwayCommons" id="Q8WXG9"/>
<dbReference type="Reactome" id="R-HSA-9619665">
    <property type="pathway name" value="EGR2 and SOX10-mediated initiation of Schwann cell myelination"/>
</dbReference>
<dbReference type="SignaLink" id="Q8WXG9"/>
<dbReference type="BioGRID-ORCS" id="84059">
    <property type="hits" value="15 hits in 1157 CRISPR screens"/>
</dbReference>
<dbReference type="ChiTaRS" id="ADGRV1">
    <property type="organism name" value="human"/>
</dbReference>
<dbReference type="GeneWiki" id="GPR98"/>
<dbReference type="GenomeRNAi" id="84059"/>
<dbReference type="Pharos" id="Q8WXG9">
    <property type="development level" value="Tbio"/>
</dbReference>
<dbReference type="PRO" id="PR:Q8WXG9"/>
<dbReference type="Proteomes" id="UP000005640">
    <property type="component" value="Chromosome 5"/>
</dbReference>
<dbReference type="RNAct" id="Q8WXG9">
    <property type="molecule type" value="protein"/>
</dbReference>
<dbReference type="Bgee" id="ENSG00000164199">
    <property type="expression patterns" value="Expressed in right adrenal gland cortex and 138 other cell types or tissues"/>
</dbReference>
<dbReference type="ExpressionAtlas" id="Q8WXG9">
    <property type="expression patterns" value="baseline and differential"/>
</dbReference>
<dbReference type="GO" id="GO:0009986">
    <property type="term" value="C:cell surface"/>
    <property type="evidence" value="ECO:0000314"/>
    <property type="project" value="HGNC-UCL"/>
</dbReference>
<dbReference type="GO" id="GO:0005737">
    <property type="term" value="C:cytoplasm"/>
    <property type="evidence" value="ECO:0000314"/>
    <property type="project" value="HGNC-UCL"/>
</dbReference>
<dbReference type="GO" id="GO:0070062">
    <property type="term" value="C:extracellular exosome"/>
    <property type="evidence" value="ECO:0007005"/>
    <property type="project" value="UniProtKB"/>
</dbReference>
<dbReference type="GO" id="GO:0016020">
    <property type="term" value="C:membrane"/>
    <property type="evidence" value="ECO:0000304"/>
    <property type="project" value="GDB"/>
</dbReference>
<dbReference type="GO" id="GO:1990075">
    <property type="term" value="C:periciliary membrane compartment"/>
    <property type="evidence" value="ECO:0000250"/>
    <property type="project" value="UniProtKB"/>
</dbReference>
<dbReference type="GO" id="GO:0001917">
    <property type="term" value="C:photoreceptor inner segment"/>
    <property type="evidence" value="ECO:0007669"/>
    <property type="project" value="UniProtKB-SubCell"/>
</dbReference>
<dbReference type="GO" id="GO:0005886">
    <property type="term" value="C:plasma membrane"/>
    <property type="evidence" value="ECO:0000250"/>
    <property type="project" value="UniProtKB"/>
</dbReference>
<dbReference type="GO" id="GO:0043235">
    <property type="term" value="C:receptor complex"/>
    <property type="evidence" value="ECO:0000314"/>
    <property type="project" value="MGI"/>
</dbReference>
<dbReference type="GO" id="GO:0002141">
    <property type="term" value="C:stereocilia ankle link"/>
    <property type="evidence" value="ECO:0000250"/>
    <property type="project" value="UniProtKB"/>
</dbReference>
<dbReference type="GO" id="GO:0002142">
    <property type="term" value="C:stereocilia ankle link complex"/>
    <property type="evidence" value="ECO:0000250"/>
    <property type="project" value="UniProtKB"/>
</dbReference>
<dbReference type="GO" id="GO:0032420">
    <property type="term" value="C:stereocilium"/>
    <property type="evidence" value="ECO:0000318"/>
    <property type="project" value="GO_Central"/>
</dbReference>
<dbReference type="GO" id="GO:0060171">
    <property type="term" value="C:stereocilium membrane"/>
    <property type="evidence" value="ECO:0007669"/>
    <property type="project" value="UniProtKB-SubCell"/>
</dbReference>
<dbReference type="GO" id="GO:1990696">
    <property type="term" value="C:USH2 complex"/>
    <property type="evidence" value="ECO:0000250"/>
    <property type="project" value="UniProtKB"/>
</dbReference>
<dbReference type="GO" id="GO:0010855">
    <property type="term" value="F:adenylate cyclase inhibitor activity"/>
    <property type="evidence" value="ECO:0000250"/>
    <property type="project" value="UniProtKB"/>
</dbReference>
<dbReference type="GO" id="GO:0005509">
    <property type="term" value="F:calcium ion binding"/>
    <property type="evidence" value="ECO:0000314"/>
    <property type="project" value="HGNC-UCL"/>
</dbReference>
<dbReference type="GO" id="GO:0004930">
    <property type="term" value="F:G protein-coupled receptor activity"/>
    <property type="evidence" value="ECO:0000250"/>
    <property type="project" value="UniProtKB"/>
</dbReference>
<dbReference type="GO" id="GO:0001965">
    <property type="term" value="F:G-protein alpha-subunit binding"/>
    <property type="evidence" value="ECO:0000250"/>
    <property type="project" value="UniProtKB"/>
</dbReference>
<dbReference type="GO" id="GO:0016787">
    <property type="term" value="F:hydrolase activity"/>
    <property type="evidence" value="ECO:0007669"/>
    <property type="project" value="UniProtKB-KW"/>
</dbReference>
<dbReference type="GO" id="GO:0007166">
    <property type="term" value="P:cell surface receptor signaling pathway"/>
    <property type="evidence" value="ECO:0007669"/>
    <property type="project" value="InterPro"/>
</dbReference>
<dbReference type="GO" id="GO:0098609">
    <property type="term" value="P:cell-cell adhesion"/>
    <property type="evidence" value="ECO:0000303"/>
    <property type="project" value="UniProtKB"/>
</dbReference>
<dbReference type="GO" id="GO:0071277">
    <property type="term" value="P:cellular response to calcium ion"/>
    <property type="evidence" value="ECO:0000250"/>
    <property type="project" value="UniProtKB"/>
</dbReference>
<dbReference type="GO" id="GO:0050910">
    <property type="term" value="P:detection of mechanical stimulus involved in sensory perception of sound"/>
    <property type="evidence" value="ECO:0000250"/>
    <property type="project" value="UniProtKB"/>
</dbReference>
<dbReference type="GO" id="GO:0045184">
    <property type="term" value="P:establishment of protein localization"/>
    <property type="evidence" value="ECO:0000250"/>
    <property type="project" value="UniProtKB"/>
</dbReference>
<dbReference type="GO" id="GO:0007186">
    <property type="term" value="P:G protein-coupled receptor signaling pathway"/>
    <property type="evidence" value="ECO:0000250"/>
    <property type="project" value="UniProtKB"/>
</dbReference>
<dbReference type="GO" id="GO:0048839">
    <property type="term" value="P:inner ear development"/>
    <property type="evidence" value="ECO:0000250"/>
    <property type="project" value="UniProtKB"/>
</dbReference>
<dbReference type="GO" id="GO:0060113">
    <property type="term" value="P:inner ear receptor cell differentiation"/>
    <property type="evidence" value="ECO:0000303"/>
    <property type="project" value="ComplexPortal"/>
</dbReference>
<dbReference type="GO" id="GO:0060122">
    <property type="term" value="P:inner ear receptor cell stereocilium organization"/>
    <property type="evidence" value="ECO:0000250"/>
    <property type="project" value="UniProtKB"/>
</dbReference>
<dbReference type="GO" id="GO:0048496">
    <property type="term" value="P:maintenance of animal organ identity"/>
    <property type="evidence" value="ECO:0000315"/>
    <property type="project" value="HGNC-UCL"/>
</dbReference>
<dbReference type="GO" id="GO:0007194">
    <property type="term" value="P:negative regulation of adenylate cyclase activity"/>
    <property type="evidence" value="ECO:0000250"/>
    <property type="project" value="UniProtKB"/>
</dbReference>
<dbReference type="GO" id="GO:0007399">
    <property type="term" value="P:nervous system development"/>
    <property type="evidence" value="ECO:0000303"/>
    <property type="project" value="UniProtKB"/>
</dbReference>
<dbReference type="GO" id="GO:0050877">
    <property type="term" value="P:nervous system process"/>
    <property type="evidence" value="ECO:0000315"/>
    <property type="project" value="HGNC-UCL"/>
</dbReference>
<dbReference type="GO" id="GO:0045494">
    <property type="term" value="P:photoreceptor cell maintenance"/>
    <property type="evidence" value="ECO:0000315"/>
    <property type="project" value="HGNC-UCL"/>
</dbReference>
<dbReference type="GO" id="GO:0030501">
    <property type="term" value="P:positive regulation of bone mineralization"/>
    <property type="evidence" value="ECO:0000250"/>
    <property type="project" value="UniProtKB"/>
</dbReference>
<dbReference type="GO" id="GO:0010739">
    <property type="term" value="P:positive regulation of protein kinase A signaling"/>
    <property type="evidence" value="ECO:0000250"/>
    <property type="project" value="UniProtKB"/>
</dbReference>
<dbReference type="GO" id="GO:0031647">
    <property type="term" value="P:regulation of protein stability"/>
    <property type="evidence" value="ECO:0000250"/>
    <property type="project" value="UniProtKB"/>
</dbReference>
<dbReference type="GO" id="GO:0097264">
    <property type="term" value="P:self proteolysis"/>
    <property type="evidence" value="ECO:0000250"/>
    <property type="project" value="UniProtKB"/>
</dbReference>
<dbReference type="GO" id="GO:0050953">
    <property type="term" value="P:sensory perception of light stimulus"/>
    <property type="evidence" value="ECO:0000315"/>
    <property type="project" value="HGNC-UCL"/>
</dbReference>
<dbReference type="GO" id="GO:0007605">
    <property type="term" value="P:sensory perception of sound"/>
    <property type="evidence" value="ECO:0000315"/>
    <property type="project" value="HGNC-UCL"/>
</dbReference>
<dbReference type="GO" id="GO:0007601">
    <property type="term" value="P:visual perception"/>
    <property type="evidence" value="ECO:0000250"/>
    <property type="project" value="UniProtKB"/>
</dbReference>
<dbReference type="FunFam" id="2.60.40.2030:FF:000017">
    <property type="entry name" value="Adhesion G protein-coupled receptor V1"/>
    <property type="match status" value="3"/>
</dbReference>
<dbReference type="FunFam" id="2.60.40.2030:FF:000020">
    <property type="entry name" value="Adhesion G protein-coupled receptor V1"/>
    <property type="match status" value="1"/>
</dbReference>
<dbReference type="FunFam" id="2.60.40.2030:FF:000021">
    <property type="entry name" value="Adhesion G protein-coupled receptor V1"/>
    <property type="match status" value="1"/>
</dbReference>
<dbReference type="FunFam" id="2.60.40.2030:FF:000023">
    <property type="entry name" value="Adhesion G protein-coupled receptor V1"/>
    <property type="match status" value="1"/>
</dbReference>
<dbReference type="FunFam" id="2.60.40.2030:FF:000025">
    <property type="entry name" value="Adhesion G protein-coupled receptor V1"/>
    <property type="match status" value="1"/>
</dbReference>
<dbReference type="FunFam" id="2.60.40.2030:FF:000026">
    <property type="entry name" value="Adhesion G protein-coupled receptor V1"/>
    <property type="match status" value="1"/>
</dbReference>
<dbReference type="FunFam" id="2.60.40.2030:FF:000027">
    <property type="entry name" value="Adhesion G protein-coupled receptor V1"/>
    <property type="match status" value="1"/>
</dbReference>
<dbReference type="FunFam" id="2.60.40.2030:FF:000031">
    <property type="entry name" value="Adhesion G protein-coupled receptor V1"/>
    <property type="match status" value="1"/>
</dbReference>
<dbReference type="FunFam" id="2.60.40.2030:FF:000033">
    <property type="entry name" value="Adhesion G protein-coupled receptor V1"/>
    <property type="match status" value="1"/>
</dbReference>
<dbReference type="FunFam" id="2.60.40.2030:FF:000036">
    <property type="entry name" value="Adhesion G protein-coupled receptor V1"/>
    <property type="match status" value="1"/>
</dbReference>
<dbReference type="FunFam" id="2.60.40.2030:FF:000037">
    <property type="entry name" value="Adhesion G protein-coupled receptor V1"/>
    <property type="match status" value="1"/>
</dbReference>
<dbReference type="FunFam" id="2.60.40.2030:FF:000042">
    <property type="entry name" value="Adhesion G protein-coupled receptor V1"/>
    <property type="match status" value="1"/>
</dbReference>
<dbReference type="FunFam" id="2.60.40.2030:FF:000044">
    <property type="entry name" value="Adhesion G protein-coupled receptor V1"/>
    <property type="match status" value="1"/>
</dbReference>
<dbReference type="FunFam" id="2.60.40.2030:FF:000046">
    <property type="entry name" value="Adhesion G protein-coupled receptor V1"/>
    <property type="match status" value="1"/>
</dbReference>
<dbReference type="FunFam" id="1.20.1070.10:FF:000178">
    <property type="entry name" value="Adhesion G-protein coupled receptor V1"/>
    <property type="match status" value="1"/>
</dbReference>
<dbReference type="FunFam" id="2.60.120.200:FF:000106">
    <property type="entry name" value="Adhesion G-protein coupled receptor V1"/>
    <property type="match status" value="1"/>
</dbReference>
<dbReference type="FunFam" id="2.60.220.50:FF:000020">
    <property type="entry name" value="Adhesion G-protein coupled receptor V1"/>
    <property type="match status" value="1"/>
</dbReference>
<dbReference type="FunFam" id="2.60.40.2030:FF:000007">
    <property type="entry name" value="Adhesion G-protein coupled receptor V1"/>
    <property type="match status" value="3"/>
</dbReference>
<dbReference type="FunFam" id="2.60.40.2030:FF:000012">
    <property type="entry name" value="Adhesion G-protein coupled receptor V1"/>
    <property type="match status" value="1"/>
</dbReference>
<dbReference type="FunFam" id="2.60.40.2030:FF:000013">
    <property type="entry name" value="Adhesion G-protein coupled receptor V1"/>
    <property type="match status" value="1"/>
</dbReference>
<dbReference type="FunFam" id="2.60.40.2030:FF:000014">
    <property type="entry name" value="Adhesion G-protein coupled receptor V1"/>
    <property type="match status" value="1"/>
</dbReference>
<dbReference type="FunFam" id="2.60.40.2030:FF:000022">
    <property type="entry name" value="Adhesion G-protein coupled receptor V1"/>
    <property type="match status" value="1"/>
</dbReference>
<dbReference type="FunFam" id="2.60.40.2030:FF:000028">
    <property type="entry name" value="Adhesion G-protein coupled receptor V1"/>
    <property type="match status" value="1"/>
</dbReference>
<dbReference type="FunFam" id="2.60.40.2030:FF:000030">
    <property type="entry name" value="Adhesion G-protein coupled receptor V1"/>
    <property type="match status" value="1"/>
</dbReference>
<dbReference type="FunFam" id="2.60.40.2030:FF:000038">
    <property type="entry name" value="Adhesion G-protein coupled receptor V1"/>
    <property type="match status" value="1"/>
</dbReference>
<dbReference type="FunFam" id="2.60.40.2030:FF:000041">
    <property type="entry name" value="Adhesion G-protein coupled receptor V1"/>
    <property type="match status" value="1"/>
</dbReference>
<dbReference type="FunFam" id="2.60.40.2030:FF:000043">
    <property type="entry name" value="Adhesion G-protein coupled receptor V1"/>
    <property type="match status" value="1"/>
</dbReference>
<dbReference type="FunFam" id="2.60.40.2030:FF:000047">
    <property type="entry name" value="Adhesion G-protein coupled receptor V1"/>
    <property type="match status" value="1"/>
</dbReference>
<dbReference type="FunFam" id="2.60.40.2030:FF:000048">
    <property type="entry name" value="Adhesion G-protein coupled receptor V1"/>
    <property type="match status" value="1"/>
</dbReference>
<dbReference type="FunFam" id="2.60.40.2030:FF:000009">
    <property type="entry name" value="adhesion G-protein coupled receptor V1"/>
    <property type="match status" value="1"/>
</dbReference>
<dbReference type="FunFam" id="2.60.40.2030:FF:000034">
    <property type="entry name" value="Adhesion G-protein-coupled receptor V1"/>
    <property type="match status" value="1"/>
</dbReference>
<dbReference type="FunFam" id="2.60.40.2030:FF:000045">
    <property type="entry name" value="Adhesion G-protein-coupled receptor V1"/>
    <property type="match status" value="1"/>
</dbReference>
<dbReference type="Gene3D" id="2.60.120.200">
    <property type="match status" value="1"/>
</dbReference>
<dbReference type="Gene3D" id="2.60.220.50">
    <property type="match status" value="1"/>
</dbReference>
<dbReference type="Gene3D" id="2.60.40.2030">
    <property type="match status" value="35"/>
</dbReference>
<dbReference type="Gene3D" id="1.20.1070.10">
    <property type="entry name" value="Rhodopsin 7-helix transmembrane proteins"/>
    <property type="match status" value="1"/>
</dbReference>
<dbReference type="InterPro" id="IPR026919">
    <property type="entry name" value="ADGRV1"/>
</dbReference>
<dbReference type="InterPro" id="IPR038081">
    <property type="entry name" value="CalX-like_sf"/>
</dbReference>
<dbReference type="InterPro" id="IPR003644">
    <property type="entry name" value="Calx_beta"/>
</dbReference>
<dbReference type="InterPro" id="IPR013320">
    <property type="entry name" value="ConA-like_dom_sf"/>
</dbReference>
<dbReference type="InterPro" id="IPR009039">
    <property type="entry name" value="EAR"/>
</dbReference>
<dbReference type="InterPro" id="IPR005492">
    <property type="entry name" value="EPTP"/>
</dbReference>
<dbReference type="InterPro" id="IPR057244">
    <property type="entry name" value="GAIN_B"/>
</dbReference>
<dbReference type="InterPro" id="IPR046338">
    <property type="entry name" value="GAIN_dom_sf"/>
</dbReference>
<dbReference type="InterPro" id="IPR017981">
    <property type="entry name" value="GPCR_2-like_7TM"/>
</dbReference>
<dbReference type="InterPro" id="IPR000832">
    <property type="entry name" value="GPCR_2_secretin-like"/>
</dbReference>
<dbReference type="PANTHER" id="PTHR46682">
    <property type="entry name" value="ADHESION G-PROTEIN COUPLED RECEPTOR V1"/>
    <property type="match status" value="1"/>
</dbReference>
<dbReference type="PANTHER" id="PTHR46682:SF1">
    <property type="entry name" value="ADHESION G-PROTEIN COUPLED RECEPTOR V1"/>
    <property type="match status" value="1"/>
</dbReference>
<dbReference type="Pfam" id="PF00002">
    <property type="entry name" value="7tm_2"/>
    <property type="match status" value="1"/>
</dbReference>
<dbReference type="Pfam" id="PF03160">
    <property type="entry name" value="Calx-beta"/>
    <property type="match status" value="33"/>
</dbReference>
<dbReference type="Pfam" id="PF03736">
    <property type="entry name" value="EPTP"/>
    <property type="match status" value="1"/>
</dbReference>
<dbReference type="Pfam" id="PF13385">
    <property type="entry name" value="Laminin_G_3"/>
    <property type="match status" value="1"/>
</dbReference>
<dbReference type="SMART" id="SM00237">
    <property type="entry name" value="Calx_beta"/>
    <property type="match status" value="19"/>
</dbReference>
<dbReference type="SUPFAM" id="SSF141072">
    <property type="entry name" value="CalX-like"/>
    <property type="match status" value="38"/>
</dbReference>
<dbReference type="SUPFAM" id="SSF49899">
    <property type="entry name" value="Concanavalin A-like lectins/glucanases"/>
    <property type="match status" value="1"/>
</dbReference>
<dbReference type="PROSITE" id="PS50912">
    <property type="entry name" value="EAR"/>
    <property type="match status" value="6"/>
</dbReference>
<dbReference type="PROSITE" id="PS50261">
    <property type="entry name" value="G_PROTEIN_RECEP_F2_4"/>
    <property type="match status" value="1"/>
</dbReference>
<dbReference type="PROSITE" id="PS50221">
    <property type="entry name" value="GAIN_B"/>
    <property type="match status" value="1"/>
</dbReference>
<keyword id="KW-0025">Alternative splicing</keyword>
<keyword id="KW-0106">Calcium</keyword>
<keyword id="KW-1003">Cell membrane</keyword>
<keyword id="KW-0966">Cell projection</keyword>
<keyword id="KW-0209">Deafness</keyword>
<keyword id="KW-1015">Disulfide bond</keyword>
<keyword id="KW-0297">G-protein coupled receptor</keyword>
<keyword id="KW-0378">Hydrolase</keyword>
<keyword id="KW-0472">Membrane</keyword>
<keyword id="KW-1267">Proteomics identification</keyword>
<keyword id="KW-0675">Receptor</keyword>
<keyword id="KW-1185">Reference proteome</keyword>
<keyword id="KW-0677">Repeat</keyword>
<keyword id="KW-0682">Retinitis pigmentosa</keyword>
<keyword id="KW-0716">Sensory transduction</keyword>
<keyword id="KW-0732">Signal</keyword>
<keyword id="KW-0807">Transducer</keyword>
<keyword id="KW-0812">Transmembrane</keyword>
<keyword id="KW-1133">Transmembrane helix</keyword>
<keyword id="KW-0836">Usher syndrome</keyword>
<keyword id="KW-0844">Vision</keyword>
<accession>Q8WXG9</accession>
<accession>O75171</accession>
<accession>Q8TF58</accession>
<accession>Q9H0X5</accession>
<accession>Q9UL61</accession>
<proteinExistence type="evidence at protein level"/>
<sequence length="6306" mass="693069">MSVFLGPGMPSASLLVNLLSALLILFVFGETEIRFTGQTEFVVNETSTTVIRLIIERIGEPANVTAIVSLYGEDAGDFFDTYAAAFIPAGETNRTVYIAVCDDDLPEPDETFIFHLTLQKPSANVKLGWPRTVTVTILSNDNAFGIISFNMLPSIAVSEPKGRNESMPLTLIREKGTYGMVMVTFEVEGGPNPPDEDLSPVKGNITFPPGRATVIYNLTVLDDEVPENDEIFLIQLKSVEGGAEINTSRNSIEIIIKKNDSPVRFLQSIYLVPEEDHILIIPVVRGKDNNGNLIGSDEYEVSISYAVTTGNSTAHAQQNLDFIDLQPNTTVVFPPFIHESHLKFQIVDDTIPEIAESFHIMLLKDTLQGDAVLISPSVVQVTIKPNDKPYGVLSFNSVLFERTVIIDEDRISRYEEITVVRNGGTHGNVSANWVLTRNSTDPSPVTADIRPSSGVLHFAQGQMLATIPLTVVDDDLPEEAEAYLLQILPHTIRGGAEVSEPAELLFYIQDSDDVYGLITFFPMENQKIESSPGERYLSLSFTRLGGTKGDVRLLYSVLYIPAGAVDPLQAKEGILNISRRNDLIFPEQKTQVTTKLPIRNDAFLQNGAHFLVQLETVELLNIIPLIPPISPRFGEICNISLLVTPAIANGEIGFLSNLPIILHEPEDFAAEVVYIPLHRDGTDGQATVYWSLKPSGFNSKAVTPDDIGPFNGSVLFLSGQSDTTINITIKGDDIPEMNETVTLSLDRVNVENQVLKSGYTSRDLIILENDDPGGVFEFSPASRGPYVIKEGESVELHIIRSRGSLVKQFLHYRVEPRDSNEFYGNTGVLEFKPGEREIVITLLARLDGIPELDEHYWVVLSSHGERESKLGSATIVNITILKNDDPHGIIEFVSDGLIVMINESKGDAIYSAVYDVVRNRGNFGDVSVSWVVSPDFTQDVFPVQGTVVFGDQEFSKNITIYSLPDEIPEEMEEFTVILLNGTGGAKVGNRTTATLRIRRNDDPIYFAEPRVVRVQEGETANFTVLRNGSVDVTCMVQYATKDGKATARERDFIPVEKGETLIFEVGSRQQSISIFVNEDGIPETDEPFYIILLNSTGDTVVYQYGVATVIIEANDDPNGIFSLEPIDKAVEEGKTNAFWILRHRGYFGSVSVSWQLFQNDSALQPGQEFYETSGTVNFMDGEEAKPIILHAFPDKIPEFNEFYFLKLVNISGGSPGPGGQLAETNLQVTVMVPFNDDPFGVFILDPECLEREVAEDVLSEDDMSYITNFTILRQQGVFGDVQLGWEILSSEFPAGLPPMIDFLLVGIFPTTVHLQQHMRRHHSGTDALYFTGLEGAFGTVNPKYHPSRNNTIANFTFSAWVMPNANTNGFIIAKDDGNGSIYYGVKIQTNESHVTLSLHYKTLGSNATYIAKTTVMKYLEESVWLHLLIILEDGIIEFYLDGNAMPRGIKSLKGEAITDGPGILRIGAGINGNDRFTGLMQDVRSYERKLTLEEIYELHAMPAKSDLHPISGYLEFRQGETNKSFIISARDDNDEEGEELFILKLVSVYGGARISEENTTARLTIQKSDNANGLFGFTGACIPEIAEEGSTISCVVERTRGALDYVHVFYTISQIETDGINYLVDDFANASGTITFLPWQRSEVLNIYVLDDDIPELNEYFRVTLVSAIPGDGKLGSTPTSGASIDPEKETTDITIKASDHPYGLLQFSTGLPPQPKDAMTLPASSVPHITVEEEDGEIRLLVIRAQGLLGRVTAEFRTVSLTAFSPEDYQNVAGTLEFQPGERYKYIFINITDNSIPELEKSFKVELLNLEGGVAELFRVDGSGSGDGDMEFFLPTIHKRASLGVASQILVTIAASDHAHGVFEFSPESLFVSGTEPEDGYSTVTLNVIRHHGTLSPVTLHWNIDSDPDGDLAFTSGNITFEIGQTSANITVEILPDEDPELDKAFSVSVLSVSSGSLGAHINATLTVLASDDPYGIFIFSEKNRPVKVEEATQNITLSIIRLKGLMGKVLVSYATLDDMEKPPYFPPNLARATQGRDYIPASGFALFGANQSEATIAISILDDDEPERSESVFIELLNSTLVAKVQSRSIPNSPRLGPKVETIAQLIIIANDDAFGTLQLSAPIVRVAENHVGPIINVTRTGGAFADVSVKFKAVPITAIAGEDYSIASSDVVLLEGETSKAVPIYVINDIYPELEESFLVQLMNETTGGARLGALTEAVIIIEASDDPYGLFGFQITKLIVEEPEFNSVKVNLPIIRNSGTLGNVTVQWVATINGQLATGDLRVVSGNVTFAPGETIQTLLLEVLADDVPEIEEVIQVQLTDASGGGTIGLDRIANIIIPANDDPYGTVAFAQMVYRVQEPLERSSCANITVRRSGGHFGRLLLFYSTSDIDVVALAMEEGQDLLSYYESPIQGVPDPLWRTWMNVSAVGEPLYTCATLCLKEQACSAFSFFSASEGPQCFWMTSWISPAVNNSDFWTYRKNMTRVASLFSGQAVAGSDYEPVTRQWAIMQEGDEFANLTVSILPDDFPEMDESFLISLLEVHLMNISASLKNQPTIGQPNISTVVIALNGDAFGVFVIYNISPNTSEDGLFVEVQEQPQTLVELMIHRTGGSLGQVAVEWRVVGGTATEGLDFIGAGEILTFAEGETKKTVILTILDDSEPEDDESIIVSLVYTEGGSRILPSSDTVRVNILANDNVAGIVSFQTASRSVIGHEGEILQFHVIRTFPGRGNVTVNWKIIGQNLELNFANFSGQLFFPEGSLNTTLFVHLLDDNIPEEKEVYQVILYDVRTQGVPPAGIALLDAQGYAAVLTVEASDEPHGVLNFALSSRFVLLQEANITIQLFINREFGSLGAINVTYTTVPGMLSLKNQTVGNLAEPEVDFVPIIGFLILEEGETAAAINITILEDDVPELEEYFLVNLTYVGLTMAASTSFPPRLDSEGLTAQVIIDANDGARGVIEWQQSRFEVNETHGSLTLVAQRSREPLGHVSLFVYAQNLEAQVGLDYIFTPMILHFADGERYKNVNIMILDDDIPEGDEKFQLILTNPSPGLELGKNTIALIIVLANDDGPGVLSFNNSEHFFLREPTALYVQESVAVLYIVREPAQGLFGTVTVQFIVTEVNSSNESKDLTPSKGYIVLEEGVRFKALQISAILDTEPEMDEYFVCTLFNPTGGARLGVHVQTLITVLQNQAPLGLFSISAVENRATSIDIEEANRTVYLNVSRTNGIDLAVSVQWETVSETAFGMRGMDVVFSVFQSFLDESASGWCFFTLENLIYGIMLRKSSVTVYRWQGIFIPVEDLNIENPKTCEAFNIGFSPYFVITHEERNEEKPSLNSVFTFTSGFKLFLVQTIIILESSQVRYFTSDSQDYLIIASQRDDSELTQVFRWNGGSFVLHQKLPVRGVLTVALFNKGGSVFLAISQANARLNSLLFRWSGSGFINFQEVPVSGTTEVEALSSANDIYLIFAENVFLGDQNSIDIFIWEMGQSSFRYFQSVDFAAVNRIHSFTPASGIAHILLIGQDMSALYCWNSERNQFSFVLEVPSAYDVASVTVKSLNSSKNLIALVGAHSHIYELAYISSHSDFIPSSGELIFEPGEREATIAVNILDDTVPEKEESFKVQLKNPKGGAEIGINDSVTITILSNDDAYGIVAFAQNSLYKQVEEMEQDSLVTLNVERLKGTYGRITIAWEADGSISDIFPTSGVILFTEGQVLSTITLTILADNIPELSEVVIVTLTRITTEGVEDSYKGATIDQDRSKSVITTLPNDSPFGLVGWRAASVFIRVAEPKENTTTLQLQIARDKGLLGDIAIHLRAQPNFLLHVDNQATENEDYVLQETIIIMKENIKEAHAEVSILPDDLPELEEGFIVTITEVNLVNSDFSTGQPSVRRPGMEIAEIMIEENDDPRGIFMFHVTRGAGEVITAYEVPPPLNVLQVPVVRLAGSFGAVNVYWKASPDSAGLEDFKPSHGILEFADKQVTAMIEITIIDDAEFELTETFNISLISVAGGGRLGDDVVVTVVIPQNDSPFGVFGFEEKTVMIDESLSSDDPDSYVTLTVVRSPGGKGTVRLEWTIDEKAKHNLSPLNGTLHFDETESQKTIVLHTLQDTVLEEDRRFTIQLISIDEVEISPVKGSASIIIRGDKRASGEVGIAPSSRHILIGEPSAKYNGTAIISLVRGPGILGEVTVFWRIFPPSVGEFAETSGKLTMRDEQSAVIVVIQALNDDIPEEKSFYEFQLTAVSEGGVLSESSSTANITVVASDSPYGRFAFSHEQLRVSEAQRVNITIIRSSGDFGHVRLWYKTMSGTAEAGLDFVPAAGELLFEAGEMRKSLHVEILDDDYPEGPEEFSLTITKVELQGRGYDFTIQENGLQIDQPPEIGNISIVRIIIMKNDNAEGIIEFDPKYTAFEVEEDVGLIMIPVVRLHGTYGYVTADFISQSSSASPGGVDYILHGSTVTFQHGQNLSFINISIIDDNESEFEEPIEILLTGATGGAVLGRHLVSRIIIAKSDSPFGVIRFLNQSKISIANPNSTMILSLVLERTGGLLGEIQVNWETVGPNSQEALLPQNRDIADPVSGLFYFGEGEGGVRTIILTIYPHEEIEVEETFIIKLHLVKGEAKLDSRAKDVTLTIQEFGDPNGVVQFAPETLSKKTYSEPLALEGPLLITFFVRRVKGTFGEIMVYWELSSEFDITEDFLSTSGFFTIADGESEASFDVHLLPDEVPEIEEDYVIQLVSVEGGAELDLEKSITWFSVYANDDPHGVFALYSDRQSILIGQNLIRSIQINITRLAGTFGDVAVGLRISSDHKEQPIVTENAERQLVVKDGATYKVDVVPIKNQVFLSLGSNFTLQLVTVMLVGGRFYGMPTILQEAKSAVLPVSEKAANSQVGFESTAFQLMNITAGTSHVMISRRGTYGALSVAWTTGYAPGLEIPEFIVVGNMTPTLGSLSFSHGEQRKGVFLWTFPSPGWPEAFVLHLSGVQSSAPGGAQLRSGFIVAEIEPMGVFQFSTSSRNIIVSEDTQMIRLHVQRLFGFHSDLIKVSYQTTAGSAKPLEDFEPVQNGELFFQKFQTEVDFEITIINDQLSEIEEFFYINLTSVEIRGLQKFDVNWSPRLNLDFSVAVITILDNDDLAGMDISFPETTVAVAVDTTLIPVETESTTYLSTSKTTTILQPTNVVAIVTEATGVSAIPEKLVTLHGTPAVSEKPDVATVTANVSIHGTFSLGPSIVYIEEEMKNGTFNTAEVLIRRTGGFTGNVSITVKTFGERCAQMEPNALPFRGIYGISNLTWAVEEEDFEEQTLTLIFLDGERERKVSVQILDDDEPEGQEFFYVFLTNPQGGAQIVEEKDDTGFAAFAMVIITGSDLHNGIIGFSEESQSGLELREGAVMRRLHLIVTRQPNRAFEDVKVFWRVTLNKTVVVLQKDGVNLVEELQSVSGTTTCTMGQTKCFISIELKPEKVPQVEVYFFVELYEATAGAAINNSARFAQIKILESDESQSLVYFSVGSRLAVAHKKATLISLQVARDSGTGLMMSVNFSTQELRSAETIGRTIISPAISGKDFVITEGTLVFEPGQRSTVLDVILTPETGSLNSFPKRFQIVLFDPKGGARIDKVYGTANITLVSDADSQAIWGLADQLHQPVNDDILNRVLHTISMKVATENTDEQLSAMMHLIEKITTEGKIQAFSVASRTLFYEILCSLINPKRKDTRGFSHFAEVTENFAFSLLTNVTCGSPGEKSKTILDSCPYLSILALHWYPQQINGHKFEGKEGDYIRIPERLLDVQDAEIMAGKSTCKLVQFTEYSSQQWFISGNNLPTLKNKVLSLSVKGQSSQLLTNDNEVLYRIYAAEPRIIPQTSLCLLWNQAAASWLSDSQFCKVVEETADYVECACSHMSVYAVYARTDNLSSYNEAFFTSGFICISGLCLAVLSHIFCARYSMFAAKLLTHMMAASLGTQILFLASAYASPQLAEESCSAMAAVTHYLYLCQFSWMLIQSVNFWYVLVMNDEHTERRYLLFFLLSWGLPAFVVILLIVILKGIYHQSMSQIYGLIHGDLCFIPNVYAALFTAALVPLTCLVVVFVVFIHAYQVKPQWKAYDDVFRGRTNAAEIPLILYLFALISVTWLWGGLHMAYRHFWMLVLFVIFNSLQGLYVFMVYFILHNQMCCPMKASYTVEMNGHPGPSTAFFTPGSGMPPAGGEISKSTQNLIGAMEEVPPDWERASFQQGSQASPDLKPSPQNGATFPSSGGYGQGSLIADEESQEFDDLIFALKTGAGLSVSDNESGQGSQEGGTLTDSQIVELRRIPIADTHL</sequence>
<comment type="function">
    <text evidence="1">G-protein coupled receptor which has an essential role in the development of hearing and vision. Couples to G-alpha(i)-proteins, GNAI1/2/3, G-alpha(q)-proteins, GNAQ, as well as G-alpha(s)-proteins, GNAS, inhibiting adenylate cyclase (AC) activity and cAMP production. Required for the hair bundle ankle formation, which connects growing stereocilia in developing cochlear hair cells of the inner ear. In response to extracellular calcium, activates kinases PKA and PKC to regulate myelination by inhibiting the ubiquitination of MAG, thus enhancing the stability of this protein in myelin-forming cells of the auditory pathway. In retina photoreceptors, the USH2 complex is required for the maintenance of periciliary membrane complex that seems to play a role in regulating intracellular protein transport. Involved in the regulation of bone metabolism.</text>
</comment>
<comment type="function">
    <molecule>ADGRV1 subunit beta</molecule>
    <text evidence="1">Cleaved ADGRV1 beta-subunit couples with G-alpha(i)-proteins, GNAI1/2/3, and constitutively inhibits adenylate cyclase (AC) activity with a stronger effect than full ADGRV1.</text>
</comment>
<comment type="subunit">
    <text evidence="1 11 12">Forms a heterodimer, consisting of a large extracellular region (alpha subunit) non-covalently linked to a seven-transmembrane moiety (beta subunit) (By similarity). Component of USH2 complex, composed of ADGRV1, PDZD7, USH2A and WHRN. Interacts with USH2A and WHRN (PubMed:16434480). Interacts (via the cytoplasmic region) with PDZD7 (PubMed:20440071). Interacts (via the cytoplasmic region) with MYO7A (via MyTH4-FERM domains) (By similarity).</text>
</comment>
<comment type="interaction">
    <interactant intactId="EBI-7851128">
        <id>Q8WXG9</id>
    </interactant>
    <interactant intactId="EBI-20859318">
        <id>Q9H5P4</id>
        <label>PDZD7</label>
    </interactant>
    <organismsDiffer>false</organismsDiffer>
    <experiments>3</experiments>
</comment>
<comment type="interaction">
    <interactant intactId="EBI-11621707">
        <id>Q8WXG9-1</id>
    </interactant>
    <interactant intactId="EBI-11523636">
        <id>Q9Y6N9-4</id>
        <label>USH1C</label>
    </interactant>
    <organismsDiffer>false</organismsDiffer>
    <experiments>3</experiments>
</comment>
<comment type="interaction">
    <interactant intactId="EBI-11621707">
        <id>Q8WXG9-1</id>
    </interactant>
    <interactant intactId="EBI-7418919">
        <id>Q9ES64-3</id>
        <label>Ush1c</label>
    </interactant>
    <organismsDiffer>true</organismsDiffer>
    <experiments>2</experiments>
</comment>
<comment type="subcellular location">
    <subcellularLocation>
        <location evidence="1">Cell membrane</location>
        <topology evidence="1">Multi-pass membrane protein</topology>
    </subcellularLocation>
    <subcellularLocation>
        <location evidence="1">Cell projection</location>
        <location evidence="1">Stereocilium membrane</location>
    </subcellularLocation>
    <subcellularLocation>
        <location evidence="1">Photoreceptor inner segment</location>
    </subcellularLocation>
    <text evidence="1">Localizes at the ankle region of the stereocilia. In photoreceptors, localizes at a plasma membrane microdomain in the apical inner segment that surrounds the connecting cilia called periciliary membrane complex.</text>
</comment>
<comment type="alternative products">
    <event type="alternative splicing"/>
    <isoform>
        <id>Q8WXG9-1</id>
        <name>1</name>
        <name>VLGR1b</name>
        <sequence type="displayed"/>
    </isoform>
    <isoform>
        <id>Q8WXG9-2</id>
        <name>2</name>
        <name>VLGR1a</name>
        <sequence type="described" ref="VSP_017947 VSP_017950"/>
    </isoform>
    <isoform>
        <id>Q8WXG9-3</id>
        <name>3</name>
        <name>VLGR1c</name>
        <sequence type="described" ref="VSP_017948 VSP_017949"/>
    </isoform>
    <isoform>
        <id>Q8WXG9-4</id>
        <name>4</name>
        <sequence type="described" ref="VSP_035313 VSP_035314"/>
    </isoform>
</comment>
<comment type="tissue specificity">
    <text evidence="6">Expressed at low levels in adult tissues.</text>
</comment>
<comment type="developmental stage">
    <text evidence="8">Isoform 1 is 4 times more abundant than isoform 2 in most tissues tested, despite wide variations in absolute levels of expression. Isoform 3 is expressed at about 1.5 times isoform 1 levels in most tissues examined. In fetal testis, isoform 3 is expressed almost exclusively.</text>
</comment>
<comment type="domain">
    <text evidence="1">The 7 transmembrane domain is required in hair cells for the hair bundle ankle formation.</text>
</comment>
<comment type="PTM">
    <text evidence="1">Autoproteolytically cleaved into 2 subunits, an extracellular alpha subunit and a seven-transmembrane subunit.</text>
</comment>
<comment type="disease" evidence="10 13">
    <disease id="DI-01119">
        <name>Usher syndrome 2C</name>
        <acronym>USH2C</acronym>
        <description>USH is a genetically heterogeneous condition characterized by the association of retinitis pigmentosa with sensorineural deafness. Age at onset and differences in auditory and vestibular function distinguish Usher syndrome type 1 (USH1), Usher syndrome type 2 (USH2) and Usher syndrome type 3 (USH3). USH2 is characterized by congenital mild hearing impairment with normal vestibular responses.</description>
        <dbReference type="MIM" id="605472"/>
    </disease>
    <text>The disease is caused by variants affecting the gene represented in this entry.</text>
</comment>
<comment type="disease">
    <disease id="DI-00489">
        <name>Febrile seizures, familial, 4</name>
        <acronym>FEB4</acronym>
        <description>Seizures associated with febrile episodes in childhood without any evidence of intracranial infection or defined pathologic or traumatic cause. It is a common condition, affecting 2-5% of children aged 3 months to 5 years. The majority are simple febrile seizures (generally defined as generalized onset, single seizures with a duration of less than 30 minutes). Complex febrile seizures are characterized by focal onset, duration greater than 30 minutes, and/or more than one seizure in a 24 hour period. The likelihood of developing epilepsy following simple febrile seizures is low. Complex febrile seizures are associated with a moderately increased incidence of epilepsy.</description>
        <dbReference type="MIM" id="604352"/>
    </disease>
    <text>The disease may be caused by variants affecting the gene represented in this entry.</text>
</comment>
<comment type="miscellaneous">
    <text>By far is the largest known cell surface protein.</text>
</comment>
<comment type="miscellaneous">
    <molecule>Isoform 2</molecule>
    <text evidence="18">May be due to intron retention.</text>
</comment>
<comment type="miscellaneous">
    <molecule>Isoform 3</molecule>
    <text evidence="19">Dubious isoform produced through aberrant splice sites.</text>
</comment>
<comment type="miscellaneous">
    <molecule>Isoform 4</molecule>
    <text evidence="18">May be due to intron retention.</text>
</comment>
<comment type="similarity">
    <text evidence="18">Belongs to the G-protein coupled receptor 2 family. Adhesion G-protein coupled receptor (ADGR) subfamily.</text>
</comment>
<comment type="sequence caution" evidence="18">
    <conflict type="frameshift">
        <sequence resource="EMBL-CDS" id="AAL30811"/>
    </conflict>
</comment>
<comment type="sequence caution" evidence="18">
    <conflict type="erroneous translation">
        <sequence resource="EMBL-CDS" id="CAB66476"/>
    </conflict>
    <text>Wrong genetic code use for translating the sequence.</text>
</comment>
<feature type="signal peptide" evidence="2">
    <location>
        <begin position="1"/>
        <end position="29"/>
    </location>
</feature>
<feature type="chain" id="PRO_0000232735" description="Adhesion G-protein coupled receptor V1">
    <location>
        <begin position="30"/>
        <end position="6306"/>
    </location>
</feature>
<feature type="chain" id="PRO_0000445731" description="ADGRV1 subunit alpha" evidence="1">
    <location>
        <begin position="30"/>
        <end position="5890"/>
    </location>
</feature>
<feature type="chain" id="PRO_0000445732" description="ADGRV1 subunit beta" evidence="1">
    <location>
        <begin position="5891"/>
        <end position="6306"/>
    </location>
</feature>
<feature type="topological domain" description="Extracellular" evidence="2">
    <location>
        <begin position="30"/>
        <end position="5908"/>
    </location>
</feature>
<feature type="transmembrane region" description="Helical" evidence="2">
    <location>
        <begin position="5909"/>
        <end position="5929"/>
    </location>
</feature>
<feature type="topological domain" description="Cytoplasmic" evidence="2">
    <location>
        <begin position="5930"/>
        <end position="5939"/>
    </location>
</feature>
<feature type="transmembrane region" description="Helical" evidence="2">
    <location>
        <begin position="5940"/>
        <end position="5960"/>
    </location>
</feature>
<feature type="topological domain" description="Extracellular" evidence="2">
    <location>
        <begin position="5961"/>
        <end position="5979"/>
    </location>
</feature>
<feature type="transmembrane region" description="Helical" evidence="2">
    <location>
        <begin position="5980"/>
        <end position="6000"/>
    </location>
</feature>
<feature type="topological domain" description="Cytoplasmic" evidence="2">
    <location>
        <begin position="6001"/>
        <end position="6010"/>
    </location>
</feature>
<feature type="transmembrane region" description="Helical" evidence="2">
    <location>
        <begin position="6011"/>
        <end position="6031"/>
    </location>
</feature>
<feature type="topological domain" description="Extracellular" evidence="2">
    <location>
        <begin position="6032"/>
        <end position="6059"/>
    </location>
</feature>
<feature type="transmembrane region" description="Helical" evidence="2">
    <location>
        <begin position="6060"/>
        <end position="6080"/>
    </location>
</feature>
<feature type="topological domain" description="Cytoplasmic" evidence="2">
    <location>
        <begin position="6081"/>
        <end position="6104"/>
    </location>
</feature>
<feature type="transmembrane region" description="Helical" evidence="2">
    <location>
        <begin position="6105"/>
        <end position="6125"/>
    </location>
</feature>
<feature type="topological domain" description="Extracellular" evidence="2">
    <location>
        <begin position="6126"/>
        <end position="6133"/>
    </location>
</feature>
<feature type="transmembrane region" description="Helical" evidence="2">
    <location>
        <begin position="6134"/>
        <end position="6154"/>
    </location>
</feature>
<feature type="topological domain" description="Cytoplasmic" evidence="2">
    <location>
        <begin position="6155"/>
        <end position="6306"/>
    </location>
</feature>
<feature type="domain" description="Calx-beta 1" evidence="2">
    <location>
        <begin position="30"/>
        <end position="117"/>
    </location>
</feature>
<feature type="domain" description="Calx-beta 2" evidence="2">
    <location>
        <begin position="133"/>
        <end position="237"/>
    </location>
</feature>
<feature type="domain" description="Calx-beta 3" evidence="19">
    <location>
        <begin position="262"/>
        <end position="362"/>
    </location>
</feature>
<feature type="domain" description="Calx-beta 4" evidence="19">
    <location>
        <begin position="388"/>
        <end position="488"/>
    </location>
</feature>
<feature type="domain" description="Calx-beta 5" evidence="19">
    <location>
        <begin position="645"/>
        <end position="745"/>
    </location>
</feature>
<feature type="domain" description="Calx-beta 6" evidence="2">
    <location>
        <begin position="763"/>
        <end position="861"/>
    </location>
</feature>
<feature type="domain" description="Calx-beta 7" evidence="2">
    <location>
        <begin position="876"/>
        <end position="979"/>
    </location>
</feature>
<feature type="domain" description="Calx-beta 8" evidence="2">
    <location>
        <begin position="993"/>
        <end position="1093"/>
    </location>
</feature>
<feature type="domain" description="Calx-beta 9" evidence="19">
    <location>
        <begin position="1108"/>
        <end position="1208"/>
    </location>
</feature>
<feature type="domain" description="Calx-beta 10" evidence="19">
    <location>
        <begin position="1444"/>
        <end position="1544"/>
    </location>
</feature>
<feature type="domain" description="Calx-beta 11" evidence="2">
    <location>
        <begin position="1564"/>
        <end position="1665"/>
    </location>
</feature>
<feature type="domain" description="Calx-beta 12" evidence="2">
    <location>
        <begin position="1710"/>
        <end position="1809"/>
    </location>
</feature>
<feature type="domain" description="Calx-beta 13" evidence="2">
    <location>
        <begin position="1850"/>
        <end position="1952"/>
    </location>
</feature>
<feature type="domain" description="Calx-beta 14" evidence="2">
    <location>
        <begin position="1966"/>
        <end position="2079"/>
    </location>
</feature>
<feature type="domain" description="Calx-beta 15" evidence="2">
    <location>
        <begin position="2107"/>
        <end position="2206"/>
    </location>
</feature>
<feature type="domain" description="Calx-beta 16" evidence="2">
    <location>
        <begin position="2222"/>
        <end position="2324"/>
    </location>
</feature>
<feature type="domain" description="Calx-beta 17" evidence="19">
    <location>
        <begin position="2441"/>
        <end position="2541"/>
    </location>
</feature>
<feature type="domain" description="Calx-beta 18" evidence="2">
    <location>
        <begin position="2584"/>
        <end position="2676"/>
    </location>
</feature>
<feature type="domain" description="Calx-beta 19" evidence="19">
    <location>
        <begin position="2689"/>
        <end position="2789"/>
    </location>
</feature>
<feature type="domain" description="Calx-beta 20" evidence="2">
    <location>
        <begin position="2814"/>
        <end position="2925"/>
    </location>
</feature>
<feature type="domain" description="Calx-beta 21" evidence="2">
    <location>
        <begin position="2947"/>
        <end position="3048"/>
    </location>
</feature>
<feature type="domain" description="Calx-beta 22" evidence="2">
    <location>
        <begin position="3063"/>
        <end position="3172"/>
    </location>
</feature>
<feature type="repeat" description="EAR 1" evidence="3">
    <location>
        <begin position="3255"/>
        <end position="3296"/>
    </location>
</feature>
<feature type="repeat" description="EAR 2" evidence="3">
    <location>
        <begin position="3297"/>
        <end position="3345"/>
    </location>
</feature>
<feature type="repeat" description="EAR 3" evidence="3">
    <location>
        <begin position="3348"/>
        <end position="3393"/>
    </location>
</feature>
<feature type="repeat" description="EAR 4" evidence="3">
    <location>
        <begin position="3395"/>
        <end position="3439"/>
    </location>
</feature>
<feature type="repeat" description="EAR 5" evidence="3">
    <location>
        <begin position="3441"/>
        <end position="3488"/>
    </location>
</feature>
<feature type="repeat" description="EAR 6" evidence="3">
    <location>
        <begin position="3492"/>
        <end position="3534"/>
    </location>
</feature>
<feature type="domain" description="Calx-beta 23" evidence="19">
    <location>
        <begin position="3525"/>
        <end position="3625"/>
    </location>
</feature>
<feature type="domain" description="Calx-beta 24" evidence="19">
    <location>
        <begin position="3639"/>
        <end position="3739"/>
    </location>
</feature>
<feature type="domain" description="Calx-beta 25" evidence="19">
    <location>
        <begin position="3775"/>
        <end position="3875"/>
    </location>
</feature>
<feature type="domain" description="Calx-beta 26" evidence="2">
    <location>
        <begin position="3899"/>
        <end position="4006"/>
    </location>
</feature>
<feature type="domain" description="Calx-beta 27" evidence="2">
    <location>
        <begin position="4020"/>
        <end position="4123"/>
    </location>
</feature>
<feature type="domain" description="Calx-beta 28" evidence="19">
    <location>
        <begin position="4139"/>
        <end position="4239"/>
    </location>
</feature>
<feature type="domain" description="Calx-beta 29" evidence="2">
    <location>
        <begin position="4255"/>
        <end position="4354"/>
    </location>
</feature>
<feature type="domain" description="Calx-beta 30" evidence="2">
    <location>
        <begin position="4387"/>
        <end position="4489"/>
    </location>
</feature>
<feature type="domain" description="Calx-beta 31" evidence="19">
    <location>
        <begin position="4512"/>
        <end position="4612"/>
    </location>
</feature>
<feature type="domain" description="Calx-beta 32" evidence="19">
    <location>
        <begin position="4634"/>
        <end position="4734"/>
    </location>
</feature>
<feature type="domain" description="Calx-beta 33" evidence="2">
    <location>
        <begin position="4992"/>
        <end position="5095"/>
    </location>
</feature>
<feature type="domain" description="Calx-beta 34" evidence="2">
    <location>
        <begin position="5288"/>
        <end position="5332"/>
    </location>
</feature>
<feature type="domain" description="Calx-beta 35" evidence="19">
    <location>
        <begin position="5368"/>
        <end position="5468"/>
    </location>
</feature>
<feature type="domain" description="GAIN-B" evidence="4">
    <location>
        <begin position="5747"/>
        <end position="5903"/>
    </location>
</feature>
<feature type="region of interest" description="GPS" evidence="4">
    <location>
        <begin position="5856"/>
        <end position="5903"/>
    </location>
</feature>
<feature type="region of interest" description="Disordered" evidence="5">
    <location>
        <begin position="6216"/>
        <end position="6248"/>
    </location>
</feature>
<feature type="compositionally biased region" description="Polar residues" evidence="5">
    <location>
        <begin position="6217"/>
        <end position="6240"/>
    </location>
</feature>
<feature type="site" description="Cleavage; by autolysis" evidence="4">
    <location>
        <begin position="5890"/>
        <end position="5891"/>
    </location>
</feature>
<feature type="disulfide bond" evidence="4">
    <location>
        <begin position="5856"/>
        <end position="5885"/>
    </location>
</feature>
<feature type="disulfide bond" evidence="4">
    <location>
        <begin position="5873"/>
        <end position="5887"/>
    </location>
</feature>
<feature type="splice variant" id="VSP_017947" description="In isoform 2." evidence="15 16">
    <location>
        <begin position="1"/>
        <end position="4339"/>
    </location>
</feature>
<feature type="splice variant" id="VSP_035313" description="In isoform 4." evidence="17">
    <original>PGILRI</original>
    <variation>EGHHHN</variation>
    <location>
        <begin position="1461"/>
        <end position="1466"/>
    </location>
</feature>
<feature type="splice variant" id="VSP_035314" description="In isoform 4." evidence="17">
    <location>
        <begin position="1467"/>
        <end position="6306"/>
    </location>
</feature>
<feature type="splice variant" id="VSP_017948" description="In isoform 3." evidence="16">
    <original>PGETIQTLLLE</original>
    <variation>RVVSGYPSATN</variation>
    <location>
        <begin position="2296"/>
        <end position="2306"/>
    </location>
</feature>
<feature type="splice variant" id="VSP_017949" description="In isoform 3." evidence="16">
    <location>
        <begin position="2307"/>
        <end position="6306"/>
    </location>
</feature>
<feature type="splice variant" id="VSP_017950" description="In isoform 2." evidence="15 16">
    <original>DDYPEGPEEFSLTITKVELQ</original>
    <variation>MQLCIFCCCCILFYFDLYDF</variation>
    <location>
        <begin position="4340"/>
        <end position="4359"/>
    </location>
</feature>
<feature type="sequence variant" id="VAR_025995" description="In dbSNP:rs41311333." evidence="10">
    <original>L</original>
    <variation>R</variation>
    <location>
        <position position="127"/>
    </location>
</feature>
<feature type="sequence variant" id="VAR_025996" description="In dbSNP:rs41303344." evidence="10">
    <original>R</original>
    <variation>K</variation>
    <location>
        <position position="249"/>
    </location>
</feature>
<feature type="sequence variant" id="VAR_046346" description="In dbSNP:rs6889939.">
    <original>V</original>
    <variation>A</variation>
    <location>
        <position position="551"/>
    </location>
</feature>
<feature type="sequence variant" id="VAR_025997" description="In dbSNP:rs2366777." evidence="9 10">
    <original>L</original>
    <variation>F</variation>
    <location>
        <position position="1093"/>
    </location>
</feature>
<feature type="sequence variant" id="VAR_046347" description="In dbSNP:rs16868935.">
    <original>I</original>
    <variation>V</variation>
    <location>
        <position position="1187"/>
    </location>
</feature>
<feature type="sequence variant" id="VAR_046348" description="In dbSNP:rs35791889.">
    <original>T</original>
    <variation>I</variation>
    <location>
        <position position="1916"/>
    </location>
</feature>
<feature type="sequence variant" id="VAR_025998" description="In dbSNP:rs17544552." evidence="10">
    <original>T</original>
    <variation>M</variation>
    <location>
        <position position="1927"/>
    </location>
</feature>
<feature type="sequence variant" id="VAR_025999" description="In dbSNP:rs4916684." evidence="10">
    <original>V</original>
    <variation>I</variation>
    <location>
        <position position="1951"/>
    </location>
</feature>
<feature type="sequence variant" id="VAR_026000" description="In dbSNP:rs41303352." evidence="10">
    <original>N</original>
    <variation>D</variation>
    <location>
        <position position="1985"/>
    </location>
</feature>
<feature type="sequence variant" id="VAR_026001" description="In dbSNP:rs4916685." evidence="10">
    <original>P</original>
    <variation>L</variation>
    <location>
        <position position="1987"/>
    </location>
</feature>
<feature type="sequence variant" id="VAR_026002" description="In dbSNP:rs16868972." evidence="10">
    <original>L</original>
    <variation>F</variation>
    <location>
        <position position="2004"/>
    </location>
</feature>
<feature type="sequence variant" id="VAR_046349" description="In dbSNP:rs16868974.">
    <original>R</original>
    <variation>C</variation>
    <location>
        <position position="2097"/>
    </location>
</feature>
<feature type="sequence variant" id="VAR_026003" description="In dbSNP:rs10037067." evidence="10">
    <original>Y</original>
    <variation>C</variation>
    <location>
        <position position="2232"/>
    </location>
</feature>
<feature type="sequence variant" id="VAR_026004" description="In dbSNP:rs2366926." evidence="10">
    <original>N</original>
    <variation>S</variation>
    <location>
        <position position="2345"/>
    </location>
</feature>
<feature type="sequence variant" id="VAR_026005" evidence="10">
    <original>G</original>
    <variation>A</variation>
    <location>
        <position position="2379"/>
    </location>
</feature>
<feature type="sequence variant" id="VAR_026006" description="In dbSNP:rs1878878." evidence="7 10">
    <original>N</original>
    <variation>S</variation>
    <location>
        <position position="2584"/>
    </location>
</feature>
<feature type="sequence variant" id="VAR_026007" description="In dbSNP:rs16869016." evidence="10">
    <original>S</original>
    <variation>L</variation>
    <location>
        <position position="2764"/>
    </location>
</feature>
<feature type="sequence variant" id="VAR_026008" description="In dbSNP:rs111033530." evidence="10">
    <original>A</original>
    <variation>T</variation>
    <location>
        <position position="2803"/>
    </location>
</feature>
<feature type="sequence variant" id="VAR_046350" description="In dbSNP:rs13157270.">
    <original>V</original>
    <variation>I</variation>
    <location>
        <position position="3094"/>
    </location>
</feature>
<feature type="sequence variant" id="VAR_026009" description="In dbSNP:rs114137750." evidence="10">
    <original>A</original>
    <variation>V</variation>
    <location>
        <position position="3217"/>
    </location>
</feature>
<feature type="sequence variant" id="VAR_026010" description="In dbSNP:rs16869032." evidence="10">
    <original>G</original>
    <variation>D</variation>
    <location>
        <position position="3248"/>
    </location>
</feature>
<feature type="sequence variant" id="VAR_046351" description="In dbSNP:rs10067636.">
    <original>F</original>
    <variation>L</variation>
    <location>
        <position position="3347"/>
    </location>
</feature>
<feature type="sequence variant" id="VAR_026011" description="In dbSNP:rs2366928." evidence="7 10">
    <original>E</original>
    <variation>K</variation>
    <location>
        <position position="3471"/>
    </location>
</feature>
<feature type="sequence variant" id="VAR_046352" description="In dbSNP:rs16869088.">
    <original>E</original>
    <variation>A</variation>
    <location>
        <position position="3867"/>
    </location>
</feature>
<feature type="sequence variant" id="VAR_055933" description="In dbSNP:rs16869088.">
    <original>E</original>
    <variation>A</variation>
    <location>
        <position position="3868"/>
    </location>
</feature>
<feature type="sequence variant" id="VAR_068032" description="In USH2C; dbSNP:rs1131691924." evidence="13">
    <original>R</original>
    <variation>W</variation>
    <location>
        <position position="4789"/>
    </location>
</feature>
<feature type="sequence variant" id="VAR_026012" description="In dbSNP:rs2438374." evidence="6 8 10 14">
    <original>E</original>
    <variation>G</variation>
    <location>
        <position position="5344"/>
    </location>
</feature>
<feature type="sequence variant" id="VAR_026013" description="In dbSNP:rs770471921.">
    <original>T</original>
    <variation>A</variation>
    <location>
        <position position="5437"/>
    </location>
</feature>
<feature type="sequence variant" id="VAR_068033" description="In USH2C; dbSNP:rs756460900." evidence="13">
    <original>H</original>
    <variation>R</variation>
    <location>
        <position position="5978"/>
    </location>
</feature>
<feature type="sequence conflict" description="In Ref. 2; AAL30811." evidence="18" ref="2">
    <original>E</original>
    <variation>G</variation>
    <location>
        <position position="107"/>
    </location>
</feature>
<feature type="sequence conflict" description="In Ref. 2; AAL30811." evidence="18" ref="2">
    <original>T</original>
    <variation>A</variation>
    <location>
        <position position="219"/>
    </location>
</feature>
<feature type="sequence conflict" description="In Ref. 2; AAL30811." evidence="18" ref="2">
    <original>K</original>
    <variation>E</variation>
    <location>
        <position position="257"/>
    </location>
</feature>
<feature type="sequence conflict" description="In Ref. 2; AAL30811." evidence="18" ref="2">
    <original>LTR</original>
    <variation>VTP</variation>
    <location>
        <begin position="435"/>
        <end position="437"/>
    </location>
</feature>
<feature type="sequence conflict" description="In Ref. 2; AAL30811." evidence="18" ref="2">
    <original>VV</original>
    <variation>GG</variation>
    <location>
        <begin position="471"/>
        <end position="472"/>
    </location>
</feature>
<feature type="sequence conflict" description="In Ref. 2; AAL30811." evidence="18" ref="2">
    <original>E</original>
    <variation>G</variation>
    <location>
        <position position="534"/>
    </location>
</feature>
<feature type="sequence conflict" description="In Ref. 2; AAL30811." evidence="18" ref="2">
    <original>R</original>
    <variation>W</variation>
    <location>
        <position position="747"/>
    </location>
</feature>
<feature type="sequence conflict" description="In Ref. 2; AAL30811." evidence="18" ref="2">
    <original>T</original>
    <variation>P</variation>
    <location>
        <position position="1096"/>
    </location>
</feature>
<feature type="sequence conflict" description="In Ref. 2; AAL30811." evidence="18" ref="2">
    <original>T</original>
    <variation>P</variation>
    <location>
        <position position="1099"/>
    </location>
</feature>
<feature type="sequence conflict" description="In Ref. 2; AAL30811." evidence="18" ref="2">
    <original>V</original>
    <variation>A</variation>
    <location>
        <position position="1232"/>
    </location>
</feature>
<feature type="sequence conflict" description="In Ref. 2; AAL30811." evidence="18" ref="2">
    <original>R</original>
    <variation>G</variation>
    <location>
        <position position="1320"/>
    </location>
</feature>
<feature type="sequence conflict" description="In Ref. 2; AAL30811." evidence="18" ref="2">
    <original>VNP</original>
    <variation>GNS</variation>
    <location>
        <begin position="1340"/>
        <end position="1342"/>
    </location>
</feature>
<feature type="sequence conflict" description="In Ref. 2; AAL30811." evidence="18" ref="2">
    <original>S</original>
    <variation>F</variation>
    <location>
        <position position="1347"/>
    </location>
</feature>
<feature type="sequence conflict" description="In Ref. 2; AAL30811." evidence="18" ref="2">
    <original>G</original>
    <variation>D</variation>
    <location>
        <position position="3230"/>
    </location>
</feature>
<feature type="sequence conflict" description="In Ref. 2; AAL30811." evidence="18" ref="2">
    <original>A</original>
    <variation>T</variation>
    <location>
        <position position="3528"/>
    </location>
</feature>
<feature type="sequence conflict" description="In Ref. 2; AAL30811." evidence="18" ref="2">
    <original>A</original>
    <variation>V</variation>
    <location>
        <position position="3552"/>
    </location>
</feature>
<feature type="sequence conflict" description="In Ref. 2; AAL30811." evidence="18" ref="2">
    <original>E</original>
    <variation>G</variation>
    <location>
        <position position="4244"/>
    </location>
</feature>
<feature type="sequence conflict" description="In Ref. 1; AAD55586, 2; AAL30811 and 6; BAA31661." evidence="18" ref="1 2 6">
    <original>V</original>
    <variation>M</variation>
    <location>
        <position position="5427"/>
    </location>
</feature>
<feature type="sequence conflict" description="In Ref. 1; AAD55586, 2; AAL30811 and 6; BAA31661." evidence="18" ref="1 2 6">
    <original>V</original>
    <variation>I</variation>
    <location>
        <position position="5876"/>
    </location>
</feature>
<evidence type="ECO:0000250" key="1">
    <source>
        <dbReference type="UniProtKB" id="Q8VHN7"/>
    </source>
</evidence>
<evidence type="ECO:0000255" key="2"/>
<evidence type="ECO:0000255" key="3">
    <source>
        <dbReference type="PROSITE-ProRule" id="PRU00075"/>
    </source>
</evidence>
<evidence type="ECO:0000255" key="4">
    <source>
        <dbReference type="PROSITE-ProRule" id="PRU00098"/>
    </source>
</evidence>
<evidence type="ECO:0000256" key="5">
    <source>
        <dbReference type="SAM" id="MobiDB-lite"/>
    </source>
</evidence>
<evidence type="ECO:0000269" key="6">
    <source>
    </source>
</evidence>
<evidence type="ECO:0000269" key="7">
    <source>
    </source>
</evidence>
<evidence type="ECO:0000269" key="8">
    <source>
    </source>
</evidence>
<evidence type="ECO:0000269" key="9">
    <source>
    </source>
</evidence>
<evidence type="ECO:0000269" key="10">
    <source>
    </source>
</evidence>
<evidence type="ECO:0000269" key="11">
    <source>
    </source>
</evidence>
<evidence type="ECO:0000269" key="12">
    <source>
    </source>
</evidence>
<evidence type="ECO:0000269" key="13">
    <source>
    </source>
</evidence>
<evidence type="ECO:0000269" key="14">
    <source>
    </source>
</evidence>
<evidence type="ECO:0000303" key="15">
    <source>
    </source>
</evidence>
<evidence type="ECO:0000303" key="16">
    <source>
    </source>
</evidence>
<evidence type="ECO:0000303" key="17">
    <source>
    </source>
</evidence>
<evidence type="ECO:0000305" key="18"/>
<evidence type="ECO:0000305" key="19">
    <source>
    </source>
</evidence>
<evidence type="ECO:0000312" key="20">
    <source>
        <dbReference type="HGNC" id="HGNC:17416"/>
    </source>
</evidence>
<organism>
    <name type="scientific">Homo sapiens</name>
    <name type="common">Human</name>
    <dbReference type="NCBI Taxonomy" id="9606"/>
    <lineage>
        <taxon>Eukaryota</taxon>
        <taxon>Metazoa</taxon>
        <taxon>Chordata</taxon>
        <taxon>Craniata</taxon>
        <taxon>Vertebrata</taxon>
        <taxon>Euteleostomi</taxon>
        <taxon>Mammalia</taxon>
        <taxon>Eutheria</taxon>
        <taxon>Euarchontoglires</taxon>
        <taxon>Primates</taxon>
        <taxon>Haplorrhini</taxon>
        <taxon>Catarrhini</taxon>
        <taxon>Hominidae</taxon>
        <taxon>Homo</taxon>
    </lineage>
</organism>
<gene>
    <name evidence="20" type="primary">ADGRV1</name>
    <name type="synonym">GPR98</name>
    <name type="synonym">KIAA0686</name>
    <name type="synonym">KIAA1943</name>
    <name type="synonym">MASS1</name>
    <name evidence="16" type="synonym">VLGR1</name>
</gene>